<keyword id="KW-0378">Hydrolase</keyword>
<keyword id="KW-0479">Metal-binding</keyword>
<keyword id="KW-1185">Reference proteome</keyword>
<keyword id="KW-0862">Zinc</keyword>
<name>CDD_MYCTO</name>
<accession>P9WPH2</accession>
<accession>L0TEZ3</accession>
<accession>O53367</accession>
<accession>Q7D5Q5</accession>
<feature type="initiator methionine" description="Removed" evidence="1">
    <location>
        <position position="1"/>
    </location>
</feature>
<feature type="chain" id="PRO_0000426952" description="Cytidine deaminase">
    <location>
        <begin position="2"/>
        <end position="133"/>
    </location>
</feature>
<feature type="domain" description="CMP/dCMP-type deaminase" evidence="2">
    <location>
        <begin position="4"/>
        <end position="126"/>
    </location>
</feature>
<feature type="active site" description="Proton donor" evidence="1">
    <location>
        <position position="58"/>
    </location>
</feature>
<feature type="binding site" evidence="1">
    <location>
        <begin position="45"/>
        <end position="47"/>
    </location>
    <ligand>
        <name>substrate</name>
    </ligand>
</feature>
<feature type="binding site" evidence="1">
    <location>
        <position position="56"/>
    </location>
    <ligand>
        <name>Zn(2+)</name>
        <dbReference type="ChEBI" id="CHEBI:29105"/>
    </ligand>
</feature>
<feature type="binding site" evidence="1">
    <location>
        <position position="89"/>
    </location>
    <ligand>
        <name>Zn(2+)</name>
        <dbReference type="ChEBI" id="CHEBI:29105"/>
    </ligand>
</feature>
<feature type="binding site" evidence="1">
    <location>
        <position position="92"/>
    </location>
    <ligand>
        <name>Zn(2+)</name>
        <dbReference type="ChEBI" id="CHEBI:29105"/>
    </ligand>
</feature>
<sequence>MPDVDWNMLRGNATQAAAGAYVPYSRFAVGAAALVDDGRVVTGCNVENVSYGLTLCAECAVVCALHSTGGGRLLALACVDGHGSVLMPCGRCRQVLLEHGGSELLIDHPVRPRRLGDLLPDAFGLDDLPRERR</sequence>
<organism>
    <name type="scientific">Mycobacterium tuberculosis (strain CDC 1551 / Oshkosh)</name>
    <dbReference type="NCBI Taxonomy" id="83331"/>
    <lineage>
        <taxon>Bacteria</taxon>
        <taxon>Bacillati</taxon>
        <taxon>Actinomycetota</taxon>
        <taxon>Actinomycetes</taxon>
        <taxon>Mycobacteriales</taxon>
        <taxon>Mycobacteriaceae</taxon>
        <taxon>Mycobacterium</taxon>
        <taxon>Mycobacterium tuberculosis complex</taxon>
    </lineage>
</organism>
<protein>
    <recommendedName>
        <fullName>Cytidine deaminase</fullName>
        <shortName>CDD</shortName>
        <ecNumber>3.5.4.5</ecNumber>
    </recommendedName>
    <alternativeName>
        <fullName>Cytidine aminohydrolase</fullName>
        <shortName>CDA</shortName>
    </alternativeName>
</protein>
<evidence type="ECO:0000250" key="1"/>
<evidence type="ECO:0000255" key="2">
    <source>
        <dbReference type="PROSITE-ProRule" id="PRU01083"/>
    </source>
</evidence>
<evidence type="ECO:0000305" key="3"/>
<gene>
    <name type="primary">cdd</name>
    <name type="ordered locus">MT3416</name>
</gene>
<comment type="function">
    <text evidence="1">Recycles cytidine and 2-deoxycytidine for uridine and 2-deoxyuridine synthesis, respectively. Catalyzes the hydrolytic deamination of cytidine and 2-deoxycytidine to form, respectively, uridine and 2-deoxyuridine (By similarity).</text>
</comment>
<comment type="catalytic activity">
    <reaction>
        <text>cytidine + H2O + H(+) = uridine + NH4(+)</text>
        <dbReference type="Rhea" id="RHEA:16069"/>
        <dbReference type="ChEBI" id="CHEBI:15377"/>
        <dbReference type="ChEBI" id="CHEBI:15378"/>
        <dbReference type="ChEBI" id="CHEBI:16704"/>
        <dbReference type="ChEBI" id="CHEBI:17562"/>
        <dbReference type="ChEBI" id="CHEBI:28938"/>
        <dbReference type="EC" id="3.5.4.5"/>
    </reaction>
</comment>
<comment type="catalytic activity">
    <reaction>
        <text>2'-deoxycytidine + H2O + H(+) = 2'-deoxyuridine + NH4(+)</text>
        <dbReference type="Rhea" id="RHEA:13433"/>
        <dbReference type="ChEBI" id="CHEBI:15377"/>
        <dbReference type="ChEBI" id="CHEBI:15378"/>
        <dbReference type="ChEBI" id="CHEBI:15698"/>
        <dbReference type="ChEBI" id="CHEBI:16450"/>
        <dbReference type="ChEBI" id="CHEBI:28938"/>
        <dbReference type="EC" id="3.5.4.5"/>
    </reaction>
</comment>
<comment type="cofactor">
    <cofactor evidence="1">
        <name>Zn(2+)</name>
        <dbReference type="ChEBI" id="CHEBI:29105"/>
    </cofactor>
    <text evidence="1">Binds 1 Zn(2+) ion per subunit.</text>
</comment>
<comment type="subunit">
    <text evidence="1">Homotetramer.</text>
</comment>
<comment type="similarity">
    <text evidence="3">Belongs to the cytidine and deoxycytidylate deaminase family.</text>
</comment>
<proteinExistence type="inferred from homology"/>
<dbReference type="EC" id="3.5.4.5"/>
<dbReference type="EMBL" id="AE000516">
    <property type="protein sequence ID" value="AAK47758.1"/>
    <property type="molecule type" value="Genomic_DNA"/>
</dbReference>
<dbReference type="PIR" id="B70843">
    <property type="entry name" value="B70843"/>
</dbReference>
<dbReference type="RefSeq" id="WP_003417264.1">
    <property type="nucleotide sequence ID" value="NZ_KK341227.1"/>
</dbReference>
<dbReference type="SMR" id="P9WPH2"/>
<dbReference type="KEGG" id="mtc:MT3416"/>
<dbReference type="PATRIC" id="fig|83331.31.peg.3675"/>
<dbReference type="HOGENOM" id="CLU_097262_0_0_11"/>
<dbReference type="Proteomes" id="UP000001020">
    <property type="component" value="Chromosome"/>
</dbReference>
<dbReference type="GO" id="GO:0005829">
    <property type="term" value="C:cytosol"/>
    <property type="evidence" value="ECO:0007669"/>
    <property type="project" value="TreeGrafter"/>
</dbReference>
<dbReference type="GO" id="GO:0004126">
    <property type="term" value="F:cytidine deaminase activity"/>
    <property type="evidence" value="ECO:0007669"/>
    <property type="project" value="UniProtKB-EC"/>
</dbReference>
<dbReference type="GO" id="GO:0008270">
    <property type="term" value="F:zinc ion binding"/>
    <property type="evidence" value="ECO:0007669"/>
    <property type="project" value="TreeGrafter"/>
</dbReference>
<dbReference type="GO" id="GO:0009972">
    <property type="term" value="P:cytidine deamination"/>
    <property type="evidence" value="ECO:0007669"/>
    <property type="project" value="TreeGrafter"/>
</dbReference>
<dbReference type="CDD" id="cd01283">
    <property type="entry name" value="cytidine_deaminase"/>
    <property type="match status" value="1"/>
</dbReference>
<dbReference type="FunFam" id="3.40.140.10:FF:000008">
    <property type="entry name" value="Cytidine deaminase"/>
    <property type="match status" value="1"/>
</dbReference>
<dbReference type="Gene3D" id="3.40.140.10">
    <property type="entry name" value="Cytidine Deaminase, domain 2"/>
    <property type="match status" value="1"/>
</dbReference>
<dbReference type="InterPro" id="IPR002125">
    <property type="entry name" value="CMP_dCMP_dom"/>
</dbReference>
<dbReference type="InterPro" id="IPR050202">
    <property type="entry name" value="Cyt/Deoxycyt_deaminase"/>
</dbReference>
<dbReference type="InterPro" id="IPR016193">
    <property type="entry name" value="Cytidine_deaminase-like"/>
</dbReference>
<dbReference type="NCBIfam" id="NF004064">
    <property type="entry name" value="PRK05578.1"/>
    <property type="match status" value="1"/>
</dbReference>
<dbReference type="PANTHER" id="PTHR11644">
    <property type="entry name" value="CYTIDINE DEAMINASE"/>
    <property type="match status" value="1"/>
</dbReference>
<dbReference type="PANTHER" id="PTHR11644:SF2">
    <property type="entry name" value="CYTIDINE DEAMINASE"/>
    <property type="match status" value="1"/>
</dbReference>
<dbReference type="Pfam" id="PF00383">
    <property type="entry name" value="dCMP_cyt_deam_1"/>
    <property type="match status" value="1"/>
</dbReference>
<dbReference type="SUPFAM" id="SSF53927">
    <property type="entry name" value="Cytidine deaminase-like"/>
    <property type="match status" value="1"/>
</dbReference>
<dbReference type="PROSITE" id="PS00903">
    <property type="entry name" value="CYT_DCMP_DEAMINASES_1"/>
    <property type="match status" value="1"/>
</dbReference>
<dbReference type="PROSITE" id="PS51747">
    <property type="entry name" value="CYT_DCMP_DEAMINASES_2"/>
    <property type="match status" value="1"/>
</dbReference>
<reference key="1">
    <citation type="journal article" date="2002" name="J. Bacteriol.">
        <title>Whole-genome comparison of Mycobacterium tuberculosis clinical and laboratory strains.</title>
        <authorList>
            <person name="Fleischmann R.D."/>
            <person name="Alland D."/>
            <person name="Eisen J.A."/>
            <person name="Carpenter L."/>
            <person name="White O."/>
            <person name="Peterson J.D."/>
            <person name="DeBoy R.T."/>
            <person name="Dodson R.J."/>
            <person name="Gwinn M.L."/>
            <person name="Haft D.H."/>
            <person name="Hickey E.K."/>
            <person name="Kolonay J.F."/>
            <person name="Nelson W.C."/>
            <person name="Umayam L.A."/>
            <person name="Ermolaeva M.D."/>
            <person name="Salzberg S.L."/>
            <person name="Delcher A."/>
            <person name="Utterback T.R."/>
            <person name="Weidman J.F."/>
            <person name="Khouri H.M."/>
            <person name="Gill J."/>
            <person name="Mikula A."/>
            <person name="Bishai W."/>
            <person name="Jacobs W.R. Jr."/>
            <person name="Venter J.C."/>
            <person name="Fraser C.M."/>
        </authorList>
    </citation>
    <scope>NUCLEOTIDE SEQUENCE [LARGE SCALE GENOMIC DNA]</scope>
    <source>
        <strain>CDC 1551 / Oshkosh</strain>
    </source>
</reference>